<feature type="signal peptide" evidence="3">
    <location>
        <begin position="1"/>
        <end position="21"/>
    </location>
</feature>
<feature type="propeptide" id="PRO_0000035514" evidence="1">
    <location>
        <begin position="22"/>
        <end position="37"/>
    </location>
</feature>
<feature type="chain" id="PRO_0000035515" description="U6-ctenitoxin-Pn1a">
    <location>
        <begin position="38"/>
        <end position="71"/>
    </location>
</feature>
<feature type="propeptide" id="PRO_0000035516" evidence="1">
    <location>
        <begin position="72"/>
        <end position="80"/>
    </location>
</feature>
<feature type="disulfide bond" evidence="2">
    <location>
        <begin position="39"/>
        <end position="54"/>
    </location>
</feature>
<feature type="disulfide bond" evidence="2">
    <location>
        <begin position="46"/>
        <end position="59"/>
    </location>
</feature>
<feature type="disulfide bond" evidence="2">
    <location>
        <begin position="53"/>
        <end position="69"/>
    </location>
</feature>
<feature type="disulfide bond" evidence="2">
    <location>
        <begin position="61"/>
        <end position="67"/>
    </location>
</feature>
<name>TX21B_PHONI</name>
<proteinExistence type="inferred from homology"/>
<evidence type="ECO:0000250" key="1"/>
<evidence type="ECO:0000250" key="2">
    <source>
        <dbReference type="UniProtKB" id="P30288"/>
    </source>
</evidence>
<evidence type="ECO:0000255" key="3"/>
<evidence type="ECO:0000303" key="4">
    <source>
    </source>
</evidence>
<evidence type="ECO:0000305" key="5"/>
<evidence type="ECO:0000305" key="6">
    <source>
    </source>
</evidence>
<organism>
    <name type="scientific">Phoneutria nigriventer</name>
    <name type="common">Brazilian armed spider</name>
    <name type="synonym">Ctenus nigriventer</name>
    <dbReference type="NCBI Taxonomy" id="6918"/>
    <lineage>
        <taxon>Eukaryota</taxon>
        <taxon>Metazoa</taxon>
        <taxon>Ecdysozoa</taxon>
        <taxon>Arthropoda</taxon>
        <taxon>Chelicerata</taxon>
        <taxon>Arachnida</taxon>
        <taxon>Araneae</taxon>
        <taxon>Araneomorphae</taxon>
        <taxon>Entelegynae</taxon>
        <taxon>Lycosoidea</taxon>
        <taxon>Ctenidae</taxon>
        <taxon>Phoneutria</taxon>
    </lineage>
</organism>
<keyword id="KW-0108">Calcium channel impairing toxin</keyword>
<keyword id="KW-1015">Disulfide bond</keyword>
<keyword id="KW-0872">Ion channel impairing toxin</keyword>
<keyword id="KW-0960">Knottin</keyword>
<keyword id="KW-0528">Neurotoxin</keyword>
<keyword id="KW-0964">Secreted</keyword>
<keyword id="KW-0732">Signal</keyword>
<keyword id="KW-0800">Toxin</keyword>
<keyword id="KW-1218">Voltage-gated calcium channel impairing toxin</keyword>
<sequence length="80" mass="8938">MWLKIQVFVLALALITLGIQAEPNSGPNNPLIQEEARACADVYKECWYPEKPCCKDRACQCTLGMTCKCKATLGDLFGRR</sequence>
<accession>P81793</accession>
<comment type="function">
    <text evidence="1">Antagonist of L-type calcium channels (Cav1/CACNA1).</text>
</comment>
<comment type="subcellular location">
    <subcellularLocation>
        <location evidence="6">Secreted</location>
    </subcellularLocation>
</comment>
<comment type="tissue specificity">
    <text evidence="6">Expressed by the venom gland.</text>
</comment>
<comment type="domain">
    <text evidence="2">The presence of a 'disulfide through disulfide knot' structurally defines this protein as a knottin.</text>
</comment>
<comment type="similarity">
    <text evidence="5">Belongs to the neurotoxin 02 (plectoxin) family. 01 (Tx3) subfamily.</text>
</comment>
<protein>
    <recommendedName>
        <fullName evidence="5">U6-ctenitoxin-Pn1a</fullName>
        <shortName evidence="5">U6-CNTX-Pn1a</shortName>
    </recommendedName>
    <alternativeName>
        <fullName evidence="4">Neurotoxin Pn3A</fullName>
    </alternativeName>
</protein>
<reference key="1">
    <citation type="journal article" date="1998" name="Toxicon">
        <title>Cloning, cDNA sequence analysis and patch clamp studies of a toxin from the venom of the armed spider (Phoneutria nigriventer).</title>
        <authorList>
            <person name="Kalapothakis E."/>
            <person name="Penaforte C.L."/>
            <person name="Leao R.M."/>
            <person name="Cruz J.S."/>
            <person name="Prado V.F."/>
            <person name="Cordeiro M.N."/>
            <person name="Diniz C.R."/>
            <person name="Romano-Silva M.A."/>
            <person name="Prado M.A.M."/>
            <person name="Gomez M.V."/>
            <person name="Beirao P.S.L."/>
        </authorList>
    </citation>
    <scope>NUCLEOTIDE SEQUENCE [MRNA]</scope>
    <source>
        <tissue>Venom gland</tissue>
    </source>
</reference>
<dbReference type="ArachnoServer" id="AS000271">
    <property type="toxin name" value="U6-ctenitoxin-Pn1a"/>
</dbReference>
<dbReference type="GO" id="GO:0005576">
    <property type="term" value="C:extracellular region"/>
    <property type="evidence" value="ECO:0007669"/>
    <property type="project" value="UniProtKB-SubCell"/>
</dbReference>
<dbReference type="GO" id="GO:0005246">
    <property type="term" value="F:calcium channel regulator activity"/>
    <property type="evidence" value="ECO:0007669"/>
    <property type="project" value="UniProtKB-KW"/>
</dbReference>
<dbReference type="GO" id="GO:0008200">
    <property type="term" value="F:ion channel inhibitor activity"/>
    <property type="evidence" value="ECO:0007669"/>
    <property type="project" value="InterPro"/>
</dbReference>
<dbReference type="GO" id="GO:0090729">
    <property type="term" value="F:toxin activity"/>
    <property type="evidence" value="ECO:0007669"/>
    <property type="project" value="UniProtKB-KW"/>
</dbReference>
<dbReference type="CDD" id="cd12960">
    <property type="entry name" value="Spider_toxin"/>
    <property type="match status" value="1"/>
</dbReference>
<dbReference type="Gene3D" id="4.10.40.10">
    <property type="match status" value="1"/>
</dbReference>
<dbReference type="InterPro" id="IPR004169">
    <property type="entry name" value="Spidertoxin"/>
</dbReference>
<dbReference type="Pfam" id="PF02819">
    <property type="entry name" value="Toxin_9"/>
    <property type="match status" value="1"/>
</dbReference>
<dbReference type="SUPFAM" id="SSF57059">
    <property type="entry name" value="omega toxin-like"/>
    <property type="match status" value="1"/>
</dbReference>